<sequence length="290" mass="31698">MSAETTASGYIQHHLQNLTFGQLPNGSWGFAHSAAEAKEMGFWAFHVDTLGWSVALGVIFILLFRMAAKKATSGVPGALQNFVEVMVGFVDGSVKDSFHGRSPVIAPLALTIFVWVFLMNAIDLVPVDWIPQLAMLISGDQHIPFRAVSTTDPNATLGMALSVFALIIFYSIKVKGIGGFIGELTLHPFGSKNILVQALLIPVNFLLEFVTLVAKPISLALRLFGNMYAGELVFILIAVMFGSGLLWLSGMGVVLQWAWAVFHILIITLQAFIFMMLTIVYLSMAHEENH</sequence>
<proteinExistence type="inferred from homology"/>
<comment type="function">
    <text evidence="1">Key component of the proton channel; it plays a direct role in the translocation of protons across the membrane.</text>
</comment>
<comment type="subunit">
    <text evidence="1">F-type ATPases have 2 components, CF(1) - the catalytic core - and CF(0) - the membrane proton channel. CF(1) has five subunits: alpha(3), beta(3), gamma(1), delta(1), epsilon(1). CF(0) has three main subunits: a(1), b(2) and c(9-12). The alpha and beta chains form an alternating ring which encloses part of the gamma chain. CF(1) is attached to CF(0) by a central stalk formed by the gamma and epsilon chains, while a peripheral stalk is formed by the delta and b chains.</text>
</comment>
<comment type="subcellular location">
    <subcellularLocation>
        <location evidence="1">Cell inner membrane</location>
        <topology evidence="1">Multi-pass membrane protein</topology>
    </subcellularLocation>
</comment>
<comment type="similarity">
    <text evidence="1">Belongs to the ATPase A chain family.</text>
</comment>
<protein>
    <recommendedName>
        <fullName evidence="1">ATP synthase subunit a</fullName>
    </recommendedName>
    <alternativeName>
        <fullName evidence="1">ATP synthase F0 sector subunit a</fullName>
    </alternativeName>
    <alternativeName>
        <fullName evidence="1">F-ATPase subunit 6</fullName>
    </alternativeName>
</protein>
<dbReference type="EMBL" id="CP000076">
    <property type="protein sequence ID" value="AAY95410.1"/>
    <property type="molecule type" value="Genomic_DNA"/>
</dbReference>
<dbReference type="RefSeq" id="WP_011064386.1">
    <property type="nucleotide sequence ID" value="NC_004129.6"/>
</dbReference>
<dbReference type="SMR" id="Q4K3A3"/>
<dbReference type="STRING" id="220664.PFL_6222"/>
<dbReference type="GeneID" id="57479182"/>
<dbReference type="KEGG" id="pfl:PFL_6222"/>
<dbReference type="PATRIC" id="fig|220664.5.peg.6352"/>
<dbReference type="eggNOG" id="COG0356">
    <property type="taxonomic scope" value="Bacteria"/>
</dbReference>
<dbReference type="HOGENOM" id="CLU_041018_1_0_6"/>
<dbReference type="Proteomes" id="UP000008540">
    <property type="component" value="Chromosome"/>
</dbReference>
<dbReference type="GO" id="GO:0005886">
    <property type="term" value="C:plasma membrane"/>
    <property type="evidence" value="ECO:0007669"/>
    <property type="project" value="UniProtKB-SubCell"/>
</dbReference>
<dbReference type="GO" id="GO:0045259">
    <property type="term" value="C:proton-transporting ATP synthase complex"/>
    <property type="evidence" value="ECO:0007669"/>
    <property type="project" value="UniProtKB-KW"/>
</dbReference>
<dbReference type="GO" id="GO:0046933">
    <property type="term" value="F:proton-transporting ATP synthase activity, rotational mechanism"/>
    <property type="evidence" value="ECO:0007669"/>
    <property type="project" value="UniProtKB-UniRule"/>
</dbReference>
<dbReference type="GO" id="GO:0042777">
    <property type="term" value="P:proton motive force-driven plasma membrane ATP synthesis"/>
    <property type="evidence" value="ECO:0007669"/>
    <property type="project" value="TreeGrafter"/>
</dbReference>
<dbReference type="CDD" id="cd00310">
    <property type="entry name" value="ATP-synt_Fo_a_6"/>
    <property type="match status" value="1"/>
</dbReference>
<dbReference type="FunFam" id="1.20.120.220:FF:000002">
    <property type="entry name" value="ATP synthase subunit a"/>
    <property type="match status" value="1"/>
</dbReference>
<dbReference type="Gene3D" id="1.20.120.220">
    <property type="entry name" value="ATP synthase, F0 complex, subunit A"/>
    <property type="match status" value="1"/>
</dbReference>
<dbReference type="HAMAP" id="MF_01393">
    <property type="entry name" value="ATP_synth_a_bact"/>
    <property type="match status" value="1"/>
</dbReference>
<dbReference type="InterPro" id="IPR045082">
    <property type="entry name" value="ATP_syn_F0_a_bact/chloroplast"/>
</dbReference>
<dbReference type="InterPro" id="IPR000568">
    <property type="entry name" value="ATP_synth_F0_asu"/>
</dbReference>
<dbReference type="InterPro" id="IPR023011">
    <property type="entry name" value="ATP_synth_F0_asu_AS"/>
</dbReference>
<dbReference type="InterPro" id="IPR035908">
    <property type="entry name" value="F0_ATP_A_sf"/>
</dbReference>
<dbReference type="NCBIfam" id="TIGR01131">
    <property type="entry name" value="ATP_synt_6_or_A"/>
    <property type="match status" value="1"/>
</dbReference>
<dbReference type="NCBIfam" id="NF004477">
    <property type="entry name" value="PRK05815.1-1"/>
    <property type="match status" value="1"/>
</dbReference>
<dbReference type="PANTHER" id="PTHR42823">
    <property type="entry name" value="ATP SYNTHASE SUBUNIT A, CHLOROPLASTIC"/>
    <property type="match status" value="1"/>
</dbReference>
<dbReference type="PANTHER" id="PTHR42823:SF3">
    <property type="entry name" value="ATP SYNTHASE SUBUNIT A, CHLOROPLASTIC"/>
    <property type="match status" value="1"/>
</dbReference>
<dbReference type="Pfam" id="PF00119">
    <property type="entry name" value="ATP-synt_A"/>
    <property type="match status" value="1"/>
</dbReference>
<dbReference type="SUPFAM" id="SSF81336">
    <property type="entry name" value="F1F0 ATP synthase subunit A"/>
    <property type="match status" value="1"/>
</dbReference>
<dbReference type="PROSITE" id="PS00449">
    <property type="entry name" value="ATPASE_A"/>
    <property type="match status" value="1"/>
</dbReference>
<gene>
    <name evidence="1" type="primary">atpB</name>
    <name type="ordered locus">PFL_6222</name>
</gene>
<evidence type="ECO:0000255" key="1">
    <source>
        <dbReference type="HAMAP-Rule" id="MF_01393"/>
    </source>
</evidence>
<accession>Q4K3A3</accession>
<keyword id="KW-0066">ATP synthesis</keyword>
<keyword id="KW-0997">Cell inner membrane</keyword>
<keyword id="KW-1003">Cell membrane</keyword>
<keyword id="KW-0138">CF(0)</keyword>
<keyword id="KW-0375">Hydrogen ion transport</keyword>
<keyword id="KW-0406">Ion transport</keyword>
<keyword id="KW-0472">Membrane</keyword>
<keyword id="KW-0812">Transmembrane</keyword>
<keyword id="KW-1133">Transmembrane helix</keyword>
<keyword id="KW-0813">Transport</keyword>
<feature type="chain" id="PRO_0000362393" description="ATP synthase subunit a">
    <location>
        <begin position="1"/>
        <end position="290"/>
    </location>
</feature>
<feature type="transmembrane region" description="Helical" evidence="1">
    <location>
        <begin position="44"/>
        <end position="64"/>
    </location>
</feature>
<feature type="transmembrane region" description="Helical" evidence="1">
    <location>
        <begin position="104"/>
        <end position="124"/>
    </location>
</feature>
<feature type="transmembrane region" description="Helical" evidence="1">
    <location>
        <begin position="161"/>
        <end position="181"/>
    </location>
</feature>
<feature type="transmembrane region" description="Helical" evidence="1">
    <location>
        <begin position="194"/>
        <end position="214"/>
    </location>
</feature>
<feature type="transmembrane region" description="Helical" evidence="1">
    <location>
        <begin position="233"/>
        <end position="253"/>
    </location>
</feature>
<feature type="transmembrane region" description="Helical" evidence="1">
    <location>
        <begin position="260"/>
        <end position="280"/>
    </location>
</feature>
<name>ATP6_PSEF5</name>
<organism>
    <name type="scientific">Pseudomonas fluorescens (strain ATCC BAA-477 / NRRL B-23932 / Pf-5)</name>
    <dbReference type="NCBI Taxonomy" id="220664"/>
    <lineage>
        <taxon>Bacteria</taxon>
        <taxon>Pseudomonadati</taxon>
        <taxon>Pseudomonadota</taxon>
        <taxon>Gammaproteobacteria</taxon>
        <taxon>Pseudomonadales</taxon>
        <taxon>Pseudomonadaceae</taxon>
        <taxon>Pseudomonas</taxon>
    </lineage>
</organism>
<reference key="1">
    <citation type="journal article" date="2005" name="Nat. Biotechnol.">
        <title>Complete genome sequence of the plant commensal Pseudomonas fluorescens Pf-5.</title>
        <authorList>
            <person name="Paulsen I.T."/>
            <person name="Press C.M."/>
            <person name="Ravel J."/>
            <person name="Kobayashi D.Y."/>
            <person name="Myers G.S.A."/>
            <person name="Mavrodi D.V."/>
            <person name="DeBoy R.T."/>
            <person name="Seshadri R."/>
            <person name="Ren Q."/>
            <person name="Madupu R."/>
            <person name="Dodson R.J."/>
            <person name="Durkin A.S."/>
            <person name="Brinkac L.M."/>
            <person name="Daugherty S.C."/>
            <person name="Sullivan S.A."/>
            <person name="Rosovitz M.J."/>
            <person name="Gwinn M.L."/>
            <person name="Zhou L."/>
            <person name="Schneider D.J."/>
            <person name="Cartinhour S.W."/>
            <person name="Nelson W.C."/>
            <person name="Weidman J."/>
            <person name="Watkins K."/>
            <person name="Tran K."/>
            <person name="Khouri H."/>
            <person name="Pierson E.A."/>
            <person name="Pierson L.S. III"/>
            <person name="Thomashow L.S."/>
            <person name="Loper J.E."/>
        </authorList>
    </citation>
    <scope>NUCLEOTIDE SEQUENCE [LARGE SCALE GENOMIC DNA]</scope>
    <source>
        <strain>ATCC BAA-477 / NRRL B-23932 / Pf-5</strain>
    </source>
</reference>